<dbReference type="EMBL" id="AF071268">
    <property type="protein sequence ID" value="AAD15961.1"/>
    <property type="molecule type" value="Genomic_DNA"/>
</dbReference>
<dbReference type="EMBL" id="BC056695">
    <property type="protein sequence ID" value="AAH56695.1"/>
    <property type="molecule type" value="mRNA"/>
</dbReference>
<dbReference type="EMBL" id="DQ060566">
    <property type="protein sequence ID" value="AAY67944.1"/>
    <property type="molecule type" value="mRNA"/>
</dbReference>
<dbReference type="EMBL" id="Y14536">
    <property type="protein sequence ID" value="CAA74871.1"/>
    <property type="molecule type" value="mRNA"/>
</dbReference>
<dbReference type="RefSeq" id="NP_571201.3">
    <property type="nucleotide sequence ID" value="NM_131126.3"/>
</dbReference>
<dbReference type="SMR" id="Q9PWM6"/>
<dbReference type="STRING" id="7955.ENSDARP00000076790"/>
<dbReference type="PaxDb" id="7955-ENSDARP00000076790"/>
<dbReference type="Ensembl" id="ENSDART00000082354">
    <property type="protein sequence ID" value="ENSDARP00000076790"/>
    <property type="gene ID" value="ENSDARG00000059274"/>
</dbReference>
<dbReference type="GeneID" id="30350"/>
<dbReference type="KEGG" id="dre:30350"/>
<dbReference type="AGR" id="ZFIN:ZDB-GENE-990415-121"/>
<dbReference type="CTD" id="30350"/>
<dbReference type="ZFIN" id="ZDB-GENE-990415-121">
    <property type="gene designation" value="hoxd9a"/>
</dbReference>
<dbReference type="eggNOG" id="KOG0487">
    <property type="taxonomic scope" value="Eukaryota"/>
</dbReference>
<dbReference type="HOGENOM" id="CLU_071854_0_0_1"/>
<dbReference type="InParanoid" id="Q9PWM6"/>
<dbReference type="OMA" id="MRSWMEP"/>
<dbReference type="OrthoDB" id="6159439at2759"/>
<dbReference type="PhylomeDB" id="Q9PWM6"/>
<dbReference type="TreeFam" id="TF317819"/>
<dbReference type="PRO" id="PR:Q9PWM6"/>
<dbReference type="Proteomes" id="UP000000437">
    <property type="component" value="Chromosome 9"/>
</dbReference>
<dbReference type="Bgee" id="ENSDARG00000059274">
    <property type="expression patterns" value="Expressed in tail bud paraxial mesoderm and 24 other cell types or tissues"/>
</dbReference>
<dbReference type="GO" id="GO:0005634">
    <property type="term" value="C:nucleus"/>
    <property type="evidence" value="ECO:0000318"/>
    <property type="project" value="GO_Central"/>
</dbReference>
<dbReference type="GO" id="GO:0003700">
    <property type="term" value="F:DNA-binding transcription factor activity"/>
    <property type="evidence" value="ECO:0000318"/>
    <property type="project" value="GO_Central"/>
</dbReference>
<dbReference type="GO" id="GO:0000981">
    <property type="term" value="F:DNA-binding transcription factor activity, RNA polymerase II-specific"/>
    <property type="evidence" value="ECO:0007669"/>
    <property type="project" value="InterPro"/>
</dbReference>
<dbReference type="GO" id="GO:0000978">
    <property type="term" value="F:RNA polymerase II cis-regulatory region sequence-specific DNA binding"/>
    <property type="evidence" value="ECO:0000318"/>
    <property type="project" value="GO_Central"/>
</dbReference>
<dbReference type="GO" id="GO:0009952">
    <property type="term" value="P:anterior/posterior pattern specification"/>
    <property type="evidence" value="ECO:0000318"/>
    <property type="project" value="GO_Central"/>
</dbReference>
<dbReference type="GO" id="GO:0006351">
    <property type="term" value="P:DNA-templated transcription"/>
    <property type="evidence" value="ECO:0007669"/>
    <property type="project" value="InterPro"/>
</dbReference>
<dbReference type="GO" id="GO:0048704">
    <property type="term" value="P:embryonic skeletal system morphogenesis"/>
    <property type="evidence" value="ECO:0000318"/>
    <property type="project" value="GO_Central"/>
</dbReference>
<dbReference type="GO" id="GO:0009954">
    <property type="term" value="P:proximal/distal pattern formation"/>
    <property type="evidence" value="ECO:0000318"/>
    <property type="project" value="GO_Central"/>
</dbReference>
<dbReference type="GO" id="GO:0006357">
    <property type="term" value="P:regulation of transcription by RNA polymerase II"/>
    <property type="evidence" value="ECO:0000318"/>
    <property type="project" value="GO_Central"/>
</dbReference>
<dbReference type="CDD" id="cd00086">
    <property type="entry name" value="homeodomain"/>
    <property type="match status" value="1"/>
</dbReference>
<dbReference type="FunFam" id="1.10.10.60:FF:000018">
    <property type="entry name" value="Homeobox A10"/>
    <property type="match status" value="1"/>
</dbReference>
<dbReference type="Gene3D" id="1.10.10.60">
    <property type="entry name" value="Homeodomain-like"/>
    <property type="match status" value="1"/>
</dbReference>
<dbReference type="InterPro" id="IPR050803">
    <property type="entry name" value="Abd-B_homeobox_TF"/>
</dbReference>
<dbReference type="InterPro" id="IPR001356">
    <property type="entry name" value="HD"/>
</dbReference>
<dbReference type="InterPro" id="IPR020479">
    <property type="entry name" value="HD_metazoa"/>
</dbReference>
<dbReference type="InterPro" id="IPR017970">
    <property type="entry name" value="Homeobox_CS"/>
</dbReference>
<dbReference type="InterPro" id="IPR009057">
    <property type="entry name" value="Homeodomain-like_sf"/>
</dbReference>
<dbReference type="InterPro" id="IPR006711">
    <property type="entry name" value="Hox9_activation_N"/>
</dbReference>
<dbReference type="InterPro" id="IPR017112">
    <property type="entry name" value="HXA9/HXB9/HXC9"/>
</dbReference>
<dbReference type="PANTHER" id="PTHR45970">
    <property type="entry name" value="AGAP004664-PA"/>
    <property type="match status" value="1"/>
</dbReference>
<dbReference type="PANTHER" id="PTHR45970:SF4">
    <property type="entry name" value="HOMEOBOX PROTEIN HOX-D9"/>
    <property type="match status" value="1"/>
</dbReference>
<dbReference type="Pfam" id="PF00046">
    <property type="entry name" value="Homeodomain"/>
    <property type="match status" value="1"/>
</dbReference>
<dbReference type="Pfam" id="PF04617">
    <property type="entry name" value="Hox9_act"/>
    <property type="match status" value="1"/>
</dbReference>
<dbReference type="PIRSF" id="PIRSF037109">
    <property type="entry name" value="Homeobox_Hox9"/>
    <property type="match status" value="1"/>
</dbReference>
<dbReference type="PRINTS" id="PR00024">
    <property type="entry name" value="HOMEOBOX"/>
</dbReference>
<dbReference type="SMART" id="SM00389">
    <property type="entry name" value="HOX"/>
    <property type="match status" value="1"/>
</dbReference>
<dbReference type="SUPFAM" id="SSF46689">
    <property type="entry name" value="Homeodomain-like"/>
    <property type="match status" value="1"/>
</dbReference>
<dbReference type="PROSITE" id="PS00027">
    <property type="entry name" value="HOMEOBOX_1"/>
    <property type="match status" value="1"/>
</dbReference>
<dbReference type="PROSITE" id="PS50071">
    <property type="entry name" value="HOMEOBOX_2"/>
    <property type="match status" value="1"/>
</dbReference>
<proteinExistence type="evidence at transcript level"/>
<evidence type="ECO:0000250" key="1"/>
<evidence type="ECO:0000255" key="2">
    <source>
        <dbReference type="PROSITE-ProRule" id="PRU00108"/>
    </source>
</evidence>
<evidence type="ECO:0000256" key="3">
    <source>
        <dbReference type="SAM" id="MobiDB-lite"/>
    </source>
</evidence>
<evidence type="ECO:0000305" key="4"/>
<protein>
    <recommendedName>
        <fullName>Homeobox protein Hox-D9a</fullName>
        <shortName>Hox-D9</shortName>
    </recommendedName>
</protein>
<sequence>MSTSSALSSYYVDTIMGHEAEDVYGARYIQGSHTAPARPSGVVENADFSSCSFAPKSAVFPASWSSVHQPSTAAVSGIYHPYVHQTHLSDNRYVRSWIEPVANHISLTGFHPNSRHSGTKTESLPPKRTESAAFETETPSVPEFSLNAVSESADKATEERVGSDNSSHGEPKDEKQQQQLDPSNPAANWIHARSTRKKRCPYTKYQTLELEKEFLYNMYLTRDRRYEVARILNLTERQVKIWFQNRRMKMKKMNRERSSKDP</sequence>
<organism>
    <name type="scientific">Danio rerio</name>
    <name type="common">Zebrafish</name>
    <name type="synonym">Brachydanio rerio</name>
    <dbReference type="NCBI Taxonomy" id="7955"/>
    <lineage>
        <taxon>Eukaryota</taxon>
        <taxon>Metazoa</taxon>
        <taxon>Chordata</taxon>
        <taxon>Craniata</taxon>
        <taxon>Vertebrata</taxon>
        <taxon>Euteleostomi</taxon>
        <taxon>Actinopterygii</taxon>
        <taxon>Neopterygii</taxon>
        <taxon>Teleostei</taxon>
        <taxon>Ostariophysi</taxon>
        <taxon>Cypriniformes</taxon>
        <taxon>Danionidae</taxon>
        <taxon>Danioninae</taxon>
        <taxon>Danio</taxon>
    </lineage>
</organism>
<reference key="1">
    <citation type="journal article" date="1998" name="Science">
        <title>Zebrafish hox clusters and vertebrate genome evolution.</title>
        <authorList>
            <person name="Amores A."/>
            <person name="Force A."/>
            <person name="Yan Y.-L."/>
            <person name="Joly L."/>
            <person name="Amemiya C."/>
            <person name="Fritz A."/>
            <person name="Ho R.K."/>
            <person name="Langeland J."/>
            <person name="Prince V.E."/>
            <person name="Wang Y.-L."/>
            <person name="Westerfield M."/>
            <person name="Ekker M."/>
            <person name="Postlethwait J.H."/>
        </authorList>
    </citation>
    <scope>NUCLEOTIDE SEQUENCE [GENOMIC DNA]</scope>
</reference>
<reference key="2">
    <citation type="submission" date="2003-08" db="EMBL/GenBank/DDBJ databases">
        <authorList>
            <consortium name="NIH - Zebrafish Gene Collection (ZGC) project"/>
        </authorList>
    </citation>
    <scope>NUCLEOTIDE SEQUENCE [LARGE SCALE MRNA]</scope>
    <source>
        <tissue>Kidney</tissue>
    </source>
</reference>
<reference key="3">
    <citation type="journal article" date="2005" name="Evol. Dev.">
        <title>Genomic annotation and transcriptome analysis of the zebrafish (Danio rerio) hox complex with description of a novel member, hoxb13a.</title>
        <authorList>
            <person name="Corredor-Adamez M."/>
            <person name="Welten M.C.M."/>
            <person name="Spaink H.P."/>
            <person name="Jeffery J.E."/>
            <person name="Schoon R.T."/>
            <person name="de Bakker M.A.G."/>
            <person name="Bagowski C.P."/>
            <person name="Meijer A.H."/>
            <person name="Verbeek F.J."/>
            <person name="Richardson M.K."/>
        </authorList>
    </citation>
    <scope>NUCLEOTIDE SEQUENCE [MRNA] OF 89-190</scope>
    <source>
        <strain>Tuebingen</strain>
    </source>
</reference>
<reference key="4">
    <citation type="journal article" date="1998" name="Development">
        <title>Zebrafish hox genes: genomic organization and modified colinear expression patterns in the trunk.</title>
        <authorList>
            <person name="Prince V.E."/>
            <person name="Joly L."/>
            <person name="Ekker M."/>
            <person name="Ho R.K."/>
        </authorList>
    </citation>
    <scope>NUCLEOTIDE SEQUENCE [MRNA] OF 231-262</scope>
    <source>
        <tissue>Embryo</tissue>
    </source>
</reference>
<name>HXD9A_DANRE</name>
<comment type="function">
    <text evidence="1">Sequence-specific transcription factor which is part of a developmental regulatory system that provides cells with specific positional identities on the anterior-posterior axis.</text>
</comment>
<comment type="subcellular location">
    <subcellularLocation>
        <location evidence="2">Nucleus</location>
    </subcellularLocation>
</comment>
<comment type="similarity">
    <text evidence="4">Belongs to the Abd-B homeobox family.</text>
</comment>
<accession>Q9PWM6</accession>
<accession>O57375</accession>
<accession>Q4PR77</accession>
<accession>Q6PH69</accession>
<feature type="chain" id="PRO_0000200223" description="Homeobox protein Hox-D9a">
    <location>
        <begin position="1"/>
        <end position="262"/>
    </location>
</feature>
<feature type="DNA-binding region" description="Homeobox" evidence="2">
    <location>
        <begin position="195"/>
        <end position="254"/>
    </location>
</feature>
<feature type="region of interest" description="Disordered" evidence="3">
    <location>
        <begin position="107"/>
        <end position="187"/>
    </location>
</feature>
<feature type="compositionally biased region" description="Basic and acidic residues" evidence="3">
    <location>
        <begin position="152"/>
        <end position="176"/>
    </location>
</feature>
<feature type="compositionally biased region" description="Polar residues" evidence="3">
    <location>
        <begin position="177"/>
        <end position="186"/>
    </location>
</feature>
<feature type="sequence conflict" description="In Ref. 2; AAH56695." evidence="4" ref="2">
    <original>P</original>
    <variation>S</variation>
    <location>
        <position position="112"/>
    </location>
</feature>
<feature type="sequence conflict" description="In Ref. 2; AAH56695." evidence="4" ref="2">
    <original>D</original>
    <variation>Y</variation>
    <location>
        <position position="154"/>
    </location>
</feature>
<feature type="sequence conflict" description="In Ref. 1; AAD15961." evidence="4" ref="1">
    <original>S</original>
    <variation>G</variation>
    <location>
        <position position="183"/>
    </location>
</feature>
<gene>
    <name type="primary">hoxd9a</name>
    <name type="synonym">hoxd9</name>
</gene>
<keyword id="KW-0217">Developmental protein</keyword>
<keyword id="KW-0238">DNA-binding</keyword>
<keyword id="KW-0371">Homeobox</keyword>
<keyword id="KW-0539">Nucleus</keyword>
<keyword id="KW-1185">Reference proteome</keyword>
<keyword id="KW-0804">Transcription</keyword>
<keyword id="KW-0805">Transcription regulation</keyword>